<gene>
    <name evidence="1" type="primary">rpsS</name>
    <name type="ordered locus">CFPG_090</name>
</gene>
<evidence type="ECO:0000255" key="1">
    <source>
        <dbReference type="HAMAP-Rule" id="MF_00531"/>
    </source>
</evidence>
<evidence type="ECO:0000305" key="2"/>
<proteinExistence type="inferred from homology"/>
<reference key="1">
    <citation type="journal article" date="2008" name="Science">
        <title>Genome of an endosymbiont coupling N2 fixation to cellulolysis within RT protist cells in termite gut.</title>
        <authorList>
            <person name="Hongoh Y."/>
            <person name="Sharma V.K."/>
            <person name="Prakash T."/>
            <person name="Noda S."/>
            <person name="Toh H."/>
            <person name="Taylor T.D."/>
            <person name="Kudo T."/>
            <person name="Sakaki Y."/>
            <person name="Toyoda A."/>
            <person name="Hattori M."/>
            <person name="Ohkuma M."/>
        </authorList>
    </citation>
    <scope>NUCLEOTIDE SEQUENCE [LARGE SCALE GENOMIC DNA]</scope>
</reference>
<feature type="chain" id="PRO_1000127925" description="Small ribosomal subunit protein uS19">
    <location>
        <begin position="1"/>
        <end position="89"/>
    </location>
</feature>
<accession>B6YQ81</accession>
<protein>
    <recommendedName>
        <fullName evidence="1">Small ribosomal subunit protein uS19</fullName>
    </recommendedName>
    <alternativeName>
        <fullName evidence="2">30S ribosomal protein S19</fullName>
    </alternativeName>
</protein>
<comment type="function">
    <text evidence="1">Protein S19 forms a complex with S13 that binds strongly to the 16S ribosomal RNA.</text>
</comment>
<comment type="similarity">
    <text evidence="1">Belongs to the universal ribosomal protein uS19 family.</text>
</comment>
<keyword id="KW-1185">Reference proteome</keyword>
<keyword id="KW-0687">Ribonucleoprotein</keyword>
<keyword id="KW-0689">Ribosomal protein</keyword>
<keyword id="KW-0694">RNA-binding</keyword>
<keyword id="KW-0699">rRNA-binding</keyword>
<dbReference type="EMBL" id="AP010656">
    <property type="protein sequence ID" value="BAG83353.1"/>
    <property type="molecule type" value="Genomic_DNA"/>
</dbReference>
<dbReference type="RefSeq" id="WP_012573114.1">
    <property type="nucleotide sequence ID" value="NC_011565.1"/>
</dbReference>
<dbReference type="SMR" id="B6YQ81"/>
<dbReference type="STRING" id="511995.CFPG_090"/>
<dbReference type="KEGG" id="aps:CFPG_090"/>
<dbReference type="eggNOG" id="COG0185">
    <property type="taxonomic scope" value="Bacteria"/>
</dbReference>
<dbReference type="HOGENOM" id="CLU_144911_0_1_10"/>
<dbReference type="OrthoDB" id="9797833at2"/>
<dbReference type="Proteomes" id="UP000000723">
    <property type="component" value="Chromosome"/>
</dbReference>
<dbReference type="GO" id="GO:0005737">
    <property type="term" value="C:cytoplasm"/>
    <property type="evidence" value="ECO:0007669"/>
    <property type="project" value="UniProtKB-ARBA"/>
</dbReference>
<dbReference type="GO" id="GO:0015935">
    <property type="term" value="C:small ribosomal subunit"/>
    <property type="evidence" value="ECO:0007669"/>
    <property type="project" value="InterPro"/>
</dbReference>
<dbReference type="GO" id="GO:0019843">
    <property type="term" value="F:rRNA binding"/>
    <property type="evidence" value="ECO:0007669"/>
    <property type="project" value="UniProtKB-UniRule"/>
</dbReference>
<dbReference type="GO" id="GO:0003735">
    <property type="term" value="F:structural constituent of ribosome"/>
    <property type="evidence" value="ECO:0007669"/>
    <property type="project" value="InterPro"/>
</dbReference>
<dbReference type="GO" id="GO:0000028">
    <property type="term" value="P:ribosomal small subunit assembly"/>
    <property type="evidence" value="ECO:0007669"/>
    <property type="project" value="TreeGrafter"/>
</dbReference>
<dbReference type="GO" id="GO:0006412">
    <property type="term" value="P:translation"/>
    <property type="evidence" value="ECO:0007669"/>
    <property type="project" value="UniProtKB-UniRule"/>
</dbReference>
<dbReference type="FunFam" id="3.30.860.10:FF:000001">
    <property type="entry name" value="30S ribosomal protein S19"/>
    <property type="match status" value="1"/>
</dbReference>
<dbReference type="Gene3D" id="3.30.860.10">
    <property type="entry name" value="30s Ribosomal Protein S19, Chain A"/>
    <property type="match status" value="1"/>
</dbReference>
<dbReference type="HAMAP" id="MF_00531">
    <property type="entry name" value="Ribosomal_uS19"/>
    <property type="match status" value="1"/>
</dbReference>
<dbReference type="InterPro" id="IPR002222">
    <property type="entry name" value="Ribosomal_uS19"/>
</dbReference>
<dbReference type="InterPro" id="IPR005732">
    <property type="entry name" value="Ribosomal_uS19_bac-type"/>
</dbReference>
<dbReference type="InterPro" id="IPR020934">
    <property type="entry name" value="Ribosomal_uS19_CS"/>
</dbReference>
<dbReference type="InterPro" id="IPR023575">
    <property type="entry name" value="Ribosomal_uS19_SF"/>
</dbReference>
<dbReference type="NCBIfam" id="TIGR01050">
    <property type="entry name" value="rpsS_bact"/>
    <property type="match status" value="1"/>
</dbReference>
<dbReference type="PANTHER" id="PTHR11880">
    <property type="entry name" value="RIBOSOMAL PROTEIN S19P FAMILY MEMBER"/>
    <property type="match status" value="1"/>
</dbReference>
<dbReference type="PANTHER" id="PTHR11880:SF8">
    <property type="entry name" value="SMALL RIBOSOMAL SUBUNIT PROTEIN US19M"/>
    <property type="match status" value="1"/>
</dbReference>
<dbReference type="Pfam" id="PF00203">
    <property type="entry name" value="Ribosomal_S19"/>
    <property type="match status" value="1"/>
</dbReference>
<dbReference type="PIRSF" id="PIRSF002144">
    <property type="entry name" value="Ribosomal_S19"/>
    <property type="match status" value="1"/>
</dbReference>
<dbReference type="PRINTS" id="PR00975">
    <property type="entry name" value="RIBOSOMALS19"/>
</dbReference>
<dbReference type="SUPFAM" id="SSF54570">
    <property type="entry name" value="Ribosomal protein S19"/>
    <property type="match status" value="1"/>
</dbReference>
<dbReference type="PROSITE" id="PS00323">
    <property type="entry name" value="RIBOSOMAL_S19"/>
    <property type="match status" value="1"/>
</dbReference>
<sequence length="89" mass="10075">MSRSLRKGPYINVKLEKKILLMNESKKKSVVKTWARASMISPDFVGCTIAVHNGNKFIPVYITENMVGHKLGEFSPTRQFRGHAGNKKK</sequence>
<name>RS19_AZOPC</name>
<organism>
    <name type="scientific">Azobacteroides pseudotrichonymphae genomovar. CFP2</name>
    <dbReference type="NCBI Taxonomy" id="511995"/>
    <lineage>
        <taxon>Bacteria</taxon>
        <taxon>Pseudomonadati</taxon>
        <taxon>Bacteroidota</taxon>
        <taxon>Bacteroidia</taxon>
        <taxon>Bacteroidales</taxon>
        <taxon>Candidatus Azobacteroides</taxon>
    </lineage>
</organism>